<protein>
    <recommendedName>
        <fullName>Putative terpenoid synthase 5</fullName>
        <shortName>AtTPS05</shortName>
        <ecNumber>4.2.3.-</ecNumber>
    </recommendedName>
</protein>
<name>TPS05_ARATH</name>
<accession>O22184</accession>
<accession>F4ILI0</accession>
<dbReference type="EC" id="4.2.3.-"/>
<dbReference type="EMBL" id="AC002391">
    <property type="protein sequence ID" value="AAB87108.1"/>
    <property type="status" value="ALT_SEQ"/>
    <property type="molecule type" value="Genomic_DNA"/>
</dbReference>
<dbReference type="EMBL" id="CP002685">
    <property type="protein sequence ID" value="AEC07431.1"/>
    <property type="status" value="ALT_SEQ"/>
    <property type="molecule type" value="Genomic_DNA"/>
</dbReference>
<dbReference type="PIR" id="T00509">
    <property type="entry name" value="T00509"/>
</dbReference>
<dbReference type="RefSeq" id="NP_179904.3">
    <property type="nucleotide sequence ID" value="NM_127887.4"/>
</dbReference>
<dbReference type="SMR" id="O22184"/>
<dbReference type="FunCoup" id="O22184">
    <property type="interactions" value="22"/>
</dbReference>
<dbReference type="STRING" id="3702.O22184"/>
<dbReference type="GlyGen" id="O22184">
    <property type="glycosylation" value="1 site"/>
</dbReference>
<dbReference type="PaxDb" id="3702-AT2G23230.1"/>
<dbReference type="GeneID" id="816855"/>
<dbReference type="KEGG" id="ath:AT2G23230"/>
<dbReference type="Araport" id="AT2G23230"/>
<dbReference type="TAIR" id="AT2G23230"/>
<dbReference type="eggNOG" id="ENOG502QUCN">
    <property type="taxonomic scope" value="Eukaryota"/>
</dbReference>
<dbReference type="HOGENOM" id="CLU_003125_7_2_1"/>
<dbReference type="InParanoid" id="O22184"/>
<dbReference type="PhylomeDB" id="O22184"/>
<dbReference type="UniPathway" id="UPA00213"/>
<dbReference type="PRO" id="PR:O22184"/>
<dbReference type="Proteomes" id="UP000006548">
    <property type="component" value="Chromosome 2"/>
</dbReference>
<dbReference type="ExpressionAtlas" id="O22184">
    <property type="expression patterns" value="baseline and differential"/>
</dbReference>
<dbReference type="GO" id="GO:0005737">
    <property type="term" value="C:cytoplasm"/>
    <property type="evidence" value="ECO:0007669"/>
    <property type="project" value="UniProtKB-SubCell"/>
</dbReference>
<dbReference type="GO" id="GO:0009975">
    <property type="term" value="F:cyclase activity"/>
    <property type="evidence" value="ECO:0000318"/>
    <property type="project" value="GO_Central"/>
</dbReference>
<dbReference type="GO" id="GO:0000287">
    <property type="term" value="F:magnesium ion binding"/>
    <property type="evidence" value="ECO:0007669"/>
    <property type="project" value="InterPro"/>
</dbReference>
<dbReference type="GO" id="GO:0010333">
    <property type="term" value="F:terpene synthase activity"/>
    <property type="evidence" value="ECO:0007669"/>
    <property type="project" value="InterPro"/>
</dbReference>
<dbReference type="GO" id="GO:0016102">
    <property type="term" value="P:diterpenoid biosynthetic process"/>
    <property type="evidence" value="ECO:0007669"/>
    <property type="project" value="InterPro"/>
</dbReference>
<dbReference type="GO" id="GO:0051762">
    <property type="term" value="P:sesquiterpene biosynthetic process"/>
    <property type="evidence" value="ECO:0000318"/>
    <property type="project" value="GO_Central"/>
</dbReference>
<dbReference type="CDD" id="cd00684">
    <property type="entry name" value="Terpene_cyclase_plant_C1"/>
    <property type="match status" value="1"/>
</dbReference>
<dbReference type="FunFam" id="1.10.600.10:FF:000007">
    <property type="entry name" value="Isoprene synthase, chloroplastic"/>
    <property type="match status" value="1"/>
</dbReference>
<dbReference type="FunFam" id="1.50.10.130:FF:000001">
    <property type="entry name" value="Isoprene synthase, chloroplastic"/>
    <property type="match status" value="1"/>
</dbReference>
<dbReference type="Gene3D" id="1.10.600.10">
    <property type="entry name" value="Farnesyl Diphosphate Synthase"/>
    <property type="match status" value="1"/>
</dbReference>
<dbReference type="Gene3D" id="1.50.10.130">
    <property type="entry name" value="Terpene synthase, N-terminal domain"/>
    <property type="match status" value="1"/>
</dbReference>
<dbReference type="InterPro" id="IPR008949">
    <property type="entry name" value="Isoprenoid_synthase_dom_sf"/>
</dbReference>
<dbReference type="InterPro" id="IPR044814">
    <property type="entry name" value="Terpene_cyclase_plant_C1"/>
</dbReference>
<dbReference type="InterPro" id="IPR001906">
    <property type="entry name" value="Terpene_synth_N"/>
</dbReference>
<dbReference type="InterPro" id="IPR036965">
    <property type="entry name" value="Terpene_synth_N_sf"/>
</dbReference>
<dbReference type="InterPro" id="IPR050148">
    <property type="entry name" value="Terpene_synthase-like"/>
</dbReference>
<dbReference type="InterPro" id="IPR005630">
    <property type="entry name" value="Terpene_synthase_metal-bd"/>
</dbReference>
<dbReference type="InterPro" id="IPR008930">
    <property type="entry name" value="Terpenoid_cyclase/PrenylTrfase"/>
</dbReference>
<dbReference type="PANTHER" id="PTHR31225">
    <property type="entry name" value="OS04G0344100 PROTEIN-RELATED"/>
    <property type="match status" value="1"/>
</dbReference>
<dbReference type="PANTHER" id="PTHR31225:SF242">
    <property type="entry name" value="TERPENOID SYNTHASE 9"/>
    <property type="match status" value="1"/>
</dbReference>
<dbReference type="Pfam" id="PF01397">
    <property type="entry name" value="Terpene_synth"/>
    <property type="match status" value="1"/>
</dbReference>
<dbReference type="Pfam" id="PF03936">
    <property type="entry name" value="Terpene_synth_C"/>
    <property type="match status" value="1"/>
</dbReference>
<dbReference type="SUPFAM" id="SSF48239">
    <property type="entry name" value="Terpenoid cyclases/Protein prenyltransferases"/>
    <property type="match status" value="1"/>
</dbReference>
<dbReference type="SUPFAM" id="SSF48576">
    <property type="entry name" value="Terpenoid synthases"/>
    <property type="match status" value="1"/>
</dbReference>
<feature type="chain" id="PRO_0000403701" description="Putative terpenoid synthase 5">
    <location>
        <begin position="1"/>
        <end position="596"/>
    </location>
</feature>
<feature type="short sequence motif" description="DDXXD motif">
    <location>
        <begin position="349"/>
        <end position="353"/>
    </location>
</feature>
<feature type="binding site" evidence="1">
    <location>
        <position position="349"/>
    </location>
    <ligand>
        <name>Mg(2+)</name>
        <dbReference type="ChEBI" id="CHEBI:18420"/>
        <label>1</label>
    </ligand>
</feature>
<feature type="binding site" evidence="1">
    <location>
        <position position="349"/>
    </location>
    <ligand>
        <name>Mg(2+)</name>
        <dbReference type="ChEBI" id="CHEBI:18420"/>
        <label>2</label>
    </ligand>
</feature>
<feature type="binding site" evidence="1">
    <location>
        <position position="353"/>
    </location>
    <ligand>
        <name>Mg(2+)</name>
        <dbReference type="ChEBI" id="CHEBI:18420"/>
        <label>1</label>
    </ligand>
</feature>
<feature type="binding site" evidence="1">
    <location>
        <position position="353"/>
    </location>
    <ligand>
        <name>Mg(2+)</name>
        <dbReference type="ChEBI" id="CHEBI:18420"/>
        <label>2</label>
    </ligand>
</feature>
<feature type="binding site" evidence="1">
    <location>
        <position position="481"/>
    </location>
    <ligand>
        <name>Mg(2+)</name>
        <dbReference type="ChEBI" id="CHEBI:18420"/>
        <label>3</label>
    </ligand>
</feature>
<feature type="binding site" evidence="1">
    <location>
        <position position="489"/>
    </location>
    <ligand>
        <name>Mg(2+)</name>
        <dbReference type="ChEBI" id="CHEBI:18420"/>
        <label>3</label>
    </ligand>
</feature>
<evidence type="ECO:0000250" key="1"/>
<evidence type="ECO:0000305" key="2"/>
<organism>
    <name type="scientific">Arabidopsis thaliana</name>
    <name type="common">Mouse-ear cress</name>
    <dbReference type="NCBI Taxonomy" id="3702"/>
    <lineage>
        <taxon>Eukaryota</taxon>
        <taxon>Viridiplantae</taxon>
        <taxon>Streptophyta</taxon>
        <taxon>Embryophyta</taxon>
        <taxon>Tracheophyta</taxon>
        <taxon>Spermatophyta</taxon>
        <taxon>Magnoliopsida</taxon>
        <taxon>eudicotyledons</taxon>
        <taxon>Gunneridae</taxon>
        <taxon>Pentapetalae</taxon>
        <taxon>rosids</taxon>
        <taxon>malvids</taxon>
        <taxon>Brassicales</taxon>
        <taxon>Brassicaceae</taxon>
        <taxon>Camelineae</taxon>
        <taxon>Arabidopsis</taxon>
    </lineage>
</organism>
<sequence>MKTLTFFGPKYGTQVSLLSPNVVSKLSRFPLTSFARKPTKPVCVKTTDCDLVESQRTFNKFPRSDWGDHFLRLPFNVSDMDMLTIEMNALKSTIRKMLMYSQDVEETKERILIIYLLVALGMAYHFEDEIDDNLKHGFENIETTMAGENDLSTVSVMFWVFRTYGYNLSSDMFRRFKGEDGKFEECHTKDVKGLLSLYEAAQLGTSTEDILDEAMSFSSSHLECLAGGTCPPHISRLIQNELYMPQHHNAEILFASEYISFYKQEDVHNKVLLEFAKLNFKFLQLHWIHELKILTKWWNDQDLLSKLPPYFRDRMVECHLYAVIYYFEPQYSFGRIMLAKLLVLLTVVDDTCDRYGSVPEVAKLLDCVERWDPELGESLPDYLKTVFKFTLDVFEDCERAGKSEEGLSFNVDGALAEWAAAEKVPTVEEYLEVGGVAVTMYATIALGLLGLGPKAREHGYEWLKSRPKLVHDLATKGRLMNDMGGFKDDIGRGFLANVVNYYMKEYGTTEEETYKEFHKIVRDLEKSVNSEFLKINKGVPREILSRALNCGKMIDVTYRSGDGYTRPRGKFTEYVESLFVEHMDAPVMQYASSSTL</sequence>
<comment type="cofactor">
    <cofactor evidence="1">
        <name>Mg(2+)</name>
        <dbReference type="ChEBI" id="CHEBI:18420"/>
    </cofactor>
    <cofactor evidence="1">
        <name>Mn(2+)</name>
        <dbReference type="ChEBI" id="CHEBI:29035"/>
    </cofactor>
    <text evidence="1">Binds 3 Mg(2+) or Mn(2+) ions per subunit.</text>
</comment>
<comment type="pathway">
    <text>Secondary metabolite biosynthesis; terpenoid biosynthesis.</text>
</comment>
<comment type="subcellular location">
    <subcellularLocation>
        <location evidence="2">Cytoplasm</location>
    </subcellularLocation>
</comment>
<comment type="domain">
    <text>The Asp-Asp-Xaa-Xaa-Asp/Glu (DDXXD/E) motif is important for the catalytic activity, presumably through binding to Mg(2+).</text>
</comment>
<comment type="similarity">
    <text evidence="2">Belongs to the terpene synthase family. Tpsa subfamily.</text>
</comment>
<comment type="sequence caution" evidence="2">
    <conflict type="erroneous gene model prediction">
        <sequence resource="EMBL-CDS" id="AAB87108"/>
    </conflict>
</comment>
<comment type="sequence caution" evidence="2">
    <conflict type="erroneous gene model prediction">
        <sequence resource="EMBL-CDS" id="AEC07431"/>
    </conflict>
</comment>
<keyword id="KW-0963">Cytoplasm</keyword>
<keyword id="KW-0456">Lyase</keyword>
<keyword id="KW-0460">Magnesium</keyword>
<keyword id="KW-0464">Manganese</keyword>
<keyword id="KW-0479">Metal-binding</keyword>
<keyword id="KW-1185">Reference proteome</keyword>
<reference key="1">
    <citation type="journal article" date="1999" name="Nature">
        <title>Sequence and analysis of chromosome 2 of the plant Arabidopsis thaliana.</title>
        <authorList>
            <person name="Lin X."/>
            <person name="Kaul S."/>
            <person name="Rounsley S.D."/>
            <person name="Shea T.P."/>
            <person name="Benito M.-I."/>
            <person name="Town C.D."/>
            <person name="Fujii C.Y."/>
            <person name="Mason T.M."/>
            <person name="Bowman C.L."/>
            <person name="Barnstead M.E."/>
            <person name="Feldblyum T.V."/>
            <person name="Buell C.R."/>
            <person name="Ketchum K.A."/>
            <person name="Lee J.J."/>
            <person name="Ronning C.M."/>
            <person name="Koo H.L."/>
            <person name="Moffat K.S."/>
            <person name="Cronin L.A."/>
            <person name="Shen M."/>
            <person name="Pai G."/>
            <person name="Van Aken S."/>
            <person name="Umayam L."/>
            <person name="Tallon L.J."/>
            <person name="Gill J.E."/>
            <person name="Adams M.D."/>
            <person name="Carrera A.J."/>
            <person name="Creasy T.H."/>
            <person name="Goodman H.M."/>
            <person name="Somerville C.R."/>
            <person name="Copenhaver G.P."/>
            <person name="Preuss D."/>
            <person name="Nierman W.C."/>
            <person name="White O."/>
            <person name="Eisen J.A."/>
            <person name="Salzberg S.L."/>
            <person name="Fraser C.M."/>
            <person name="Venter J.C."/>
        </authorList>
    </citation>
    <scope>NUCLEOTIDE SEQUENCE [LARGE SCALE GENOMIC DNA]</scope>
    <source>
        <strain>cv. Columbia</strain>
    </source>
</reference>
<reference key="2">
    <citation type="journal article" date="2017" name="Plant J.">
        <title>Araport11: a complete reannotation of the Arabidopsis thaliana reference genome.</title>
        <authorList>
            <person name="Cheng C.Y."/>
            <person name="Krishnakumar V."/>
            <person name="Chan A.P."/>
            <person name="Thibaud-Nissen F."/>
            <person name="Schobel S."/>
            <person name="Town C.D."/>
        </authorList>
    </citation>
    <scope>GENOME REANNOTATION</scope>
    <source>
        <strain>cv. Columbia</strain>
    </source>
</reference>
<reference key="3">
    <citation type="journal article" date="2002" name="Mol. Genet. Genomics">
        <title>Genomic analysis of the terpenoid synthase (AtTPS) gene family of Arabidopsis thaliana.</title>
        <authorList>
            <person name="Aubourg S."/>
            <person name="Lecharny A."/>
            <person name="Bohlmann J."/>
        </authorList>
    </citation>
    <scope>GENE FAMILY</scope>
    <scope>NOMENCLATURE</scope>
</reference>
<reference key="4">
    <citation type="journal article" date="2003" name="Plant Mol. Biol.">
        <title>Genome organization in Arabidopsis thaliana: a survey for genes involved in isoprenoid and chlorophyll metabolism.</title>
        <authorList>
            <person name="Lange B.M."/>
            <person name="Ghassemian M."/>
        </authorList>
    </citation>
    <scope>GENE FAMILY</scope>
</reference>
<gene>
    <name type="primary">TPS05</name>
    <name type="ordered locus">At2g23230</name>
    <name type="ORF">T20D16.14</name>
</gene>
<proteinExistence type="inferred from homology"/>